<gene>
    <name type="primary">efeU</name>
    <name type="synonym">ywbL</name>
    <name type="ordered locus">BSU38280</name>
    <name type="ORF">ipa-27d</name>
</gene>
<sequence>MARGLALILFSLLMVFGSAAHAEDDPIAALIQLNKQMIKSVKDGDMDSAQQTFDTFKAKWKKEEPSIKKENLSSHSEMDANIAMISLSFINQDARKLKTQLEELASHLETYQQAVVLKKTSSGQSRASLTAYIQSLKDTKQFIEKKQLDEASSAIDNLVTSWLAVEGDVVSQSKEAYTTSEENLALMKAEIGSHPEKVSKQIDEMIQLLEPIASSSYSWWDAALIPVREGMEALLVIGALLTMTKKARVTRSSTWIWGGASAGMAVSLAAGIGVTVLFSSSVFGENNFLLGGVTGVLSAVMLLYVGVWLHRNASMDKWREKINIQKSQALKKRSLLSFALIAFLAVVREGLETVIFFIGLVGKLPLTELIGGTAAGLIVLVIVGVLMIKLGMRIPLKPFFLLSMAVVLYMCVKFLGTGVHSLQLAGILPSDAESWLPSVSVLGIYPSVYSTIPQMLILLFLLIALVSEAAKHFTNGKELTK</sequence>
<accession>P39595</accession>
<organism>
    <name type="scientific">Bacillus subtilis (strain 168)</name>
    <dbReference type="NCBI Taxonomy" id="224308"/>
    <lineage>
        <taxon>Bacteria</taxon>
        <taxon>Bacillati</taxon>
        <taxon>Bacillota</taxon>
        <taxon>Bacilli</taxon>
        <taxon>Bacillales</taxon>
        <taxon>Bacillaceae</taxon>
        <taxon>Bacillus</taxon>
    </lineage>
</organism>
<keyword id="KW-1003">Cell membrane</keyword>
<keyword id="KW-0406">Ion transport</keyword>
<keyword id="KW-0408">Iron</keyword>
<keyword id="KW-0410">Iron transport</keyword>
<keyword id="KW-0472">Membrane</keyword>
<keyword id="KW-1185">Reference proteome</keyword>
<keyword id="KW-0732">Signal</keyword>
<keyword id="KW-0812">Transmembrane</keyword>
<keyword id="KW-1133">Transmembrane helix</keyword>
<keyword id="KW-0813">Transport</keyword>
<protein>
    <recommendedName>
        <fullName>Iron permease EfeU</fullName>
    </recommendedName>
    <alternativeName>
        <fullName>Fe(3+) ion permease EfeU</fullName>
    </alternativeName>
    <alternativeName>
        <fullName>Ferric iron permease EfeU</fullName>
    </alternativeName>
    <alternativeName>
        <fullName>Ferric iron uptake protein</fullName>
    </alternativeName>
</protein>
<evidence type="ECO:0000255" key="1"/>
<evidence type="ECO:0000269" key="2">
    <source>
    </source>
</evidence>
<evidence type="ECO:0000305" key="3"/>
<evidence type="ECO:0000305" key="4">
    <source>
    </source>
</evidence>
<comment type="function">
    <text evidence="2 4">Part of the iron transporter system efeUOB/M involved in iron import (Probable) (PubMed:23764491). Mediates the uptake of Fe(3+) ions, delivered by EfeM, across the cell membrane (PubMed:23764491).</text>
</comment>
<comment type="subunit">
    <text evidence="2">Component of the iron transporter efeUOB/M complex composed of EfeU, EfeM and EfeB; EfeU is essential for the complex formation.</text>
</comment>
<comment type="subcellular location">
    <subcellularLocation>
        <location evidence="2">Cell membrane</location>
        <topology evidence="3">Multi-pass membrane protein</topology>
    </subcellularLocation>
</comment>
<comment type="disruption phenotype">
    <text evidence="2">Severe reduction in Fe(2+) and Fe(3+) uptake and in cell growth.</text>
</comment>
<comment type="similarity">
    <text evidence="3">Belongs to the oxidase-dependent Fe transporter (OFeT) (TC 9.A.10.1) family.</text>
</comment>
<reference key="1">
    <citation type="journal article" date="1993" name="Mol. Microbiol.">
        <title>Bacillus subtilis genome project: cloning and sequencing of the 97 kb region from 325 degrees to 333 degrees.</title>
        <authorList>
            <person name="Glaser P."/>
            <person name="Kunst F."/>
            <person name="Arnaud M."/>
            <person name="Coudart M.P."/>
            <person name="Gonzales W."/>
            <person name="Hullo M.-F."/>
            <person name="Ionescu M."/>
            <person name="Lubochinsky B."/>
            <person name="Marcelino L."/>
            <person name="Moszer I."/>
            <person name="Presecan E."/>
            <person name="Santana M."/>
            <person name="Schneider E."/>
            <person name="Schweizer J."/>
            <person name="Vertes A."/>
            <person name="Rapoport G."/>
            <person name="Danchin A."/>
        </authorList>
    </citation>
    <scope>NUCLEOTIDE SEQUENCE [GENOMIC DNA]</scope>
    <source>
        <strain>168</strain>
    </source>
</reference>
<reference key="2">
    <citation type="journal article" date="1997" name="Nature">
        <title>The complete genome sequence of the Gram-positive bacterium Bacillus subtilis.</title>
        <authorList>
            <person name="Kunst F."/>
            <person name="Ogasawara N."/>
            <person name="Moszer I."/>
            <person name="Albertini A.M."/>
            <person name="Alloni G."/>
            <person name="Azevedo V."/>
            <person name="Bertero M.G."/>
            <person name="Bessieres P."/>
            <person name="Bolotin A."/>
            <person name="Borchert S."/>
            <person name="Borriss R."/>
            <person name="Boursier L."/>
            <person name="Brans A."/>
            <person name="Braun M."/>
            <person name="Brignell S.C."/>
            <person name="Bron S."/>
            <person name="Brouillet S."/>
            <person name="Bruschi C.V."/>
            <person name="Caldwell B."/>
            <person name="Capuano V."/>
            <person name="Carter N.M."/>
            <person name="Choi S.-K."/>
            <person name="Codani J.-J."/>
            <person name="Connerton I.F."/>
            <person name="Cummings N.J."/>
            <person name="Daniel R.A."/>
            <person name="Denizot F."/>
            <person name="Devine K.M."/>
            <person name="Duesterhoeft A."/>
            <person name="Ehrlich S.D."/>
            <person name="Emmerson P.T."/>
            <person name="Entian K.-D."/>
            <person name="Errington J."/>
            <person name="Fabret C."/>
            <person name="Ferrari E."/>
            <person name="Foulger D."/>
            <person name="Fritz C."/>
            <person name="Fujita M."/>
            <person name="Fujita Y."/>
            <person name="Fuma S."/>
            <person name="Galizzi A."/>
            <person name="Galleron N."/>
            <person name="Ghim S.-Y."/>
            <person name="Glaser P."/>
            <person name="Goffeau A."/>
            <person name="Golightly E.J."/>
            <person name="Grandi G."/>
            <person name="Guiseppi G."/>
            <person name="Guy B.J."/>
            <person name="Haga K."/>
            <person name="Haiech J."/>
            <person name="Harwood C.R."/>
            <person name="Henaut A."/>
            <person name="Hilbert H."/>
            <person name="Holsappel S."/>
            <person name="Hosono S."/>
            <person name="Hullo M.-F."/>
            <person name="Itaya M."/>
            <person name="Jones L.-M."/>
            <person name="Joris B."/>
            <person name="Karamata D."/>
            <person name="Kasahara Y."/>
            <person name="Klaerr-Blanchard M."/>
            <person name="Klein C."/>
            <person name="Kobayashi Y."/>
            <person name="Koetter P."/>
            <person name="Koningstein G."/>
            <person name="Krogh S."/>
            <person name="Kumano M."/>
            <person name="Kurita K."/>
            <person name="Lapidus A."/>
            <person name="Lardinois S."/>
            <person name="Lauber J."/>
            <person name="Lazarevic V."/>
            <person name="Lee S.-M."/>
            <person name="Levine A."/>
            <person name="Liu H."/>
            <person name="Masuda S."/>
            <person name="Mauel C."/>
            <person name="Medigue C."/>
            <person name="Medina N."/>
            <person name="Mellado R.P."/>
            <person name="Mizuno M."/>
            <person name="Moestl D."/>
            <person name="Nakai S."/>
            <person name="Noback M."/>
            <person name="Noone D."/>
            <person name="O'Reilly M."/>
            <person name="Ogawa K."/>
            <person name="Ogiwara A."/>
            <person name="Oudega B."/>
            <person name="Park S.-H."/>
            <person name="Parro V."/>
            <person name="Pohl T.M."/>
            <person name="Portetelle D."/>
            <person name="Porwollik S."/>
            <person name="Prescott A.M."/>
            <person name="Presecan E."/>
            <person name="Pujic P."/>
            <person name="Purnelle B."/>
            <person name="Rapoport G."/>
            <person name="Rey M."/>
            <person name="Reynolds S."/>
            <person name="Rieger M."/>
            <person name="Rivolta C."/>
            <person name="Rocha E."/>
            <person name="Roche B."/>
            <person name="Rose M."/>
            <person name="Sadaie Y."/>
            <person name="Sato T."/>
            <person name="Scanlan E."/>
            <person name="Schleich S."/>
            <person name="Schroeter R."/>
            <person name="Scoffone F."/>
            <person name="Sekiguchi J."/>
            <person name="Sekowska A."/>
            <person name="Seror S.J."/>
            <person name="Serror P."/>
            <person name="Shin B.-S."/>
            <person name="Soldo B."/>
            <person name="Sorokin A."/>
            <person name="Tacconi E."/>
            <person name="Takagi T."/>
            <person name="Takahashi H."/>
            <person name="Takemaru K."/>
            <person name="Takeuchi M."/>
            <person name="Tamakoshi A."/>
            <person name="Tanaka T."/>
            <person name="Terpstra P."/>
            <person name="Tognoni A."/>
            <person name="Tosato V."/>
            <person name="Uchiyama S."/>
            <person name="Vandenbol M."/>
            <person name="Vannier F."/>
            <person name="Vassarotti A."/>
            <person name="Viari A."/>
            <person name="Wambutt R."/>
            <person name="Wedler E."/>
            <person name="Wedler H."/>
            <person name="Weitzenegger T."/>
            <person name="Winters P."/>
            <person name="Wipat A."/>
            <person name="Yamamoto H."/>
            <person name="Yamane K."/>
            <person name="Yasumoto K."/>
            <person name="Yata K."/>
            <person name="Yoshida K."/>
            <person name="Yoshikawa H.-F."/>
            <person name="Zumstein E."/>
            <person name="Yoshikawa H."/>
            <person name="Danchin A."/>
        </authorList>
    </citation>
    <scope>NUCLEOTIDE SEQUENCE [LARGE SCALE GENOMIC DNA]</scope>
    <source>
        <strain>168</strain>
    </source>
</reference>
<reference key="3">
    <citation type="journal article" date="2009" name="Microbiology">
        <title>From a consortium sequence to a unified sequence: the Bacillus subtilis 168 reference genome a decade later.</title>
        <authorList>
            <person name="Barbe V."/>
            <person name="Cruveiller S."/>
            <person name="Kunst F."/>
            <person name="Lenoble P."/>
            <person name="Meurice G."/>
            <person name="Sekowska A."/>
            <person name="Vallenet D."/>
            <person name="Wang T."/>
            <person name="Moszer I."/>
            <person name="Medigue C."/>
            <person name="Danchin A."/>
        </authorList>
    </citation>
    <scope>SEQUENCE REVISION TO 180-182</scope>
</reference>
<reference key="4">
    <citation type="journal article" date="2006" name="J. Bacteriol.">
        <title>Role of the Fur regulon in iron transport in Bacillus subtilis.</title>
        <authorList>
            <person name="Ollinger J."/>
            <person name="Song K.-B."/>
            <person name="Antelmann H."/>
            <person name="Hecker M."/>
            <person name="Helmann J.D."/>
        </authorList>
    </citation>
    <scope>FUNCTION IN IRON UPTAKE</scope>
    <source>
        <strain>168 / CU1065</strain>
    </source>
</reference>
<reference key="5">
    <citation type="journal article" date="2013" name="Biochim. Biophys. Acta">
        <title>The Bacillus subtilis EfeUOB transporter is essential for high-affinity acquisition of ferrous and ferric iron.</title>
        <authorList>
            <person name="Miethke M."/>
            <person name="Monteferrante C.G."/>
            <person name="Marahiel M.A."/>
            <person name="van Dijl J.M."/>
        </authorList>
    </citation>
    <scope>FUNCTION</scope>
    <scope>IDENTIFICATION IN THE EFEUOB/M COMPLEX</scope>
    <scope>SUBCELLULAR LOCATION</scope>
    <scope>DISRUPTION PHENOTYPE</scope>
</reference>
<proteinExistence type="evidence at protein level"/>
<name>EFEU_BACSU</name>
<feature type="signal peptide" evidence="1">
    <location>
        <begin position="1"/>
        <end position="22"/>
    </location>
</feature>
<feature type="chain" id="PRO_0000010305" description="Iron permease EfeU">
    <location>
        <begin position="23"/>
        <end position="481"/>
    </location>
</feature>
<feature type="transmembrane region" description="Helical" evidence="1">
    <location>
        <begin position="258"/>
        <end position="278"/>
    </location>
</feature>
<feature type="transmembrane region" description="Helical" evidence="1">
    <location>
        <begin position="288"/>
        <end position="308"/>
    </location>
</feature>
<feature type="transmembrane region" description="Helical" evidence="1">
    <location>
        <begin position="338"/>
        <end position="358"/>
    </location>
</feature>
<feature type="transmembrane region" description="Helical" evidence="1">
    <location>
        <begin position="368"/>
        <end position="388"/>
    </location>
</feature>
<feature type="transmembrane region" description="Helical" evidence="1">
    <location>
        <begin position="399"/>
        <end position="419"/>
    </location>
</feature>
<feature type="transmembrane region" description="Helical" evidence="1">
    <location>
        <begin position="446"/>
        <end position="466"/>
    </location>
</feature>
<feature type="sequence conflict" description="In Ref. 1; CAA51583." evidence="3" ref="1">
    <original>SEE</original>
    <variation>CHQ</variation>
    <location>
        <begin position="180"/>
        <end position="182"/>
    </location>
</feature>
<dbReference type="EMBL" id="X73124">
    <property type="protein sequence ID" value="CAA51583.1"/>
    <property type="molecule type" value="Genomic_DNA"/>
</dbReference>
<dbReference type="EMBL" id="AL009126">
    <property type="protein sequence ID" value="CAB15854.2"/>
    <property type="molecule type" value="Genomic_DNA"/>
</dbReference>
<dbReference type="PIR" id="S39682">
    <property type="entry name" value="S39682"/>
</dbReference>
<dbReference type="RefSeq" id="NP_391707.2">
    <property type="nucleotide sequence ID" value="NC_000964.3"/>
</dbReference>
<dbReference type="RefSeq" id="WP_003243918.1">
    <property type="nucleotide sequence ID" value="NZ_OZ025638.1"/>
</dbReference>
<dbReference type="SMR" id="P39595"/>
<dbReference type="FunCoup" id="P39595">
    <property type="interactions" value="28"/>
</dbReference>
<dbReference type="STRING" id="224308.BSU38280"/>
<dbReference type="TCDB" id="2.A.108.2.5">
    <property type="family name" value="the iron/lead transporter (ilt) family"/>
</dbReference>
<dbReference type="PaxDb" id="224308-BSU38280"/>
<dbReference type="EnsemblBacteria" id="CAB15854">
    <property type="protein sequence ID" value="CAB15854"/>
    <property type="gene ID" value="BSU_38280"/>
</dbReference>
<dbReference type="GeneID" id="938520"/>
<dbReference type="KEGG" id="bsu:BSU38280"/>
<dbReference type="PATRIC" id="fig|224308.179.peg.4144"/>
<dbReference type="eggNOG" id="COG0672">
    <property type="taxonomic scope" value="Bacteria"/>
</dbReference>
<dbReference type="InParanoid" id="P39595"/>
<dbReference type="OrthoDB" id="8215804at2"/>
<dbReference type="PhylomeDB" id="P39595"/>
<dbReference type="BioCyc" id="BSUB:BSU38280-MONOMER"/>
<dbReference type="Proteomes" id="UP000001570">
    <property type="component" value="Chromosome"/>
</dbReference>
<dbReference type="GO" id="GO:0033573">
    <property type="term" value="C:high-affinity iron permease complex"/>
    <property type="evidence" value="ECO:0007669"/>
    <property type="project" value="InterPro"/>
</dbReference>
<dbReference type="GO" id="GO:0005886">
    <property type="term" value="C:plasma membrane"/>
    <property type="evidence" value="ECO:0000318"/>
    <property type="project" value="GO_Central"/>
</dbReference>
<dbReference type="GO" id="GO:0015093">
    <property type="term" value="F:ferrous iron transmembrane transporter activity"/>
    <property type="evidence" value="ECO:0000318"/>
    <property type="project" value="GO_Central"/>
</dbReference>
<dbReference type="GO" id="GO:0034755">
    <property type="term" value="P:iron ion transmembrane transport"/>
    <property type="evidence" value="ECO:0000318"/>
    <property type="project" value="GO_Central"/>
</dbReference>
<dbReference type="InterPro" id="IPR004923">
    <property type="entry name" value="FTR1/Fip1/EfeU"/>
</dbReference>
<dbReference type="PANTHER" id="PTHR31632">
    <property type="entry name" value="IRON TRANSPORTER FTH1"/>
    <property type="match status" value="1"/>
</dbReference>
<dbReference type="PANTHER" id="PTHR31632:SF2">
    <property type="entry name" value="PLASMA MEMBRANE IRON PERMEASE"/>
    <property type="match status" value="1"/>
</dbReference>
<dbReference type="Pfam" id="PF03239">
    <property type="entry name" value="FTR1"/>
    <property type="match status" value="1"/>
</dbReference>